<reference key="1">
    <citation type="submission" date="2008-04" db="EMBL/GenBank/DDBJ databases">
        <title>Complete sequence of Yersinia pseudotuberculosis PB1/+.</title>
        <authorList>
            <person name="Copeland A."/>
            <person name="Lucas S."/>
            <person name="Lapidus A."/>
            <person name="Glavina del Rio T."/>
            <person name="Dalin E."/>
            <person name="Tice H."/>
            <person name="Bruce D."/>
            <person name="Goodwin L."/>
            <person name="Pitluck S."/>
            <person name="Munk A.C."/>
            <person name="Brettin T."/>
            <person name="Detter J.C."/>
            <person name="Han C."/>
            <person name="Tapia R."/>
            <person name="Schmutz J."/>
            <person name="Larimer F."/>
            <person name="Land M."/>
            <person name="Hauser L."/>
            <person name="Challacombe J.F."/>
            <person name="Green L."/>
            <person name="Lindler L.E."/>
            <person name="Nikolich M.P."/>
            <person name="Richardson P."/>
        </authorList>
    </citation>
    <scope>NUCLEOTIDE SEQUENCE [LARGE SCALE GENOMIC DNA]</scope>
    <source>
        <strain>PB1/+</strain>
    </source>
</reference>
<accession>B2KAD1</accession>
<name>GLO2_YERPB</name>
<feature type="chain" id="PRO_1000144823" description="Hydroxyacylglutathione hydrolase">
    <location>
        <begin position="1"/>
        <end position="251"/>
    </location>
</feature>
<feature type="binding site" evidence="1">
    <location>
        <position position="53"/>
    </location>
    <ligand>
        <name>Zn(2+)</name>
        <dbReference type="ChEBI" id="CHEBI:29105"/>
        <label>1</label>
    </ligand>
</feature>
<feature type="binding site" evidence="1">
    <location>
        <position position="55"/>
    </location>
    <ligand>
        <name>Zn(2+)</name>
        <dbReference type="ChEBI" id="CHEBI:29105"/>
        <label>1</label>
    </ligand>
</feature>
<feature type="binding site" evidence="1">
    <location>
        <position position="57"/>
    </location>
    <ligand>
        <name>Zn(2+)</name>
        <dbReference type="ChEBI" id="CHEBI:29105"/>
        <label>2</label>
    </ligand>
</feature>
<feature type="binding site" evidence="1">
    <location>
        <position position="58"/>
    </location>
    <ligand>
        <name>Zn(2+)</name>
        <dbReference type="ChEBI" id="CHEBI:29105"/>
        <label>2</label>
    </ligand>
</feature>
<feature type="binding site" evidence="1">
    <location>
        <position position="110"/>
    </location>
    <ligand>
        <name>Zn(2+)</name>
        <dbReference type="ChEBI" id="CHEBI:29105"/>
        <label>1</label>
    </ligand>
</feature>
<feature type="binding site" evidence="1">
    <location>
        <position position="127"/>
    </location>
    <ligand>
        <name>Zn(2+)</name>
        <dbReference type="ChEBI" id="CHEBI:29105"/>
        <label>1</label>
    </ligand>
</feature>
<feature type="binding site" evidence="1">
    <location>
        <position position="127"/>
    </location>
    <ligand>
        <name>Zn(2+)</name>
        <dbReference type="ChEBI" id="CHEBI:29105"/>
        <label>2</label>
    </ligand>
</feature>
<feature type="binding site" evidence="1">
    <location>
        <position position="165"/>
    </location>
    <ligand>
        <name>Zn(2+)</name>
        <dbReference type="ChEBI" id="CHEBI:29105"/>
        <label>2</label>
    </ligand>
</feature>
<comment type="function">
    <text evidence="1">Thiolesterase that catalyzes the hydrolysis of S-D-lactoyl-glutathione to form glutathione and D-lactic acid.</text>
</comment>
<comment type="catalytic activity">
    <reaction evidence="1">
        <text>an S-(2-hydroxyacyl)glutathione + H2O = a 2-hydroxy carboxylate + glutathione + H(+)</text>
        <dbReference type="Rhea" id="RHEA:21864"/>
        <dbReference type="ChEBI" id="CHEBI:15377"/>
        <dbReference type="ChEBI" id="CHEBI:15378"/>
        <dbReference type="ChEBI" id="CHEBI:57925"/>
        <dbReference type="ChEBI" id="CHEBI:58896"/>
        <dbReference type="ChEBI" id="CHEBI:71261"/>
        <dbReference type="EC" id="3.1.2.6"/>
    </reaction>
</comment>
<comment type="cofactor">
    <cofactor evidence="1">
        <name>Zn(2+)</name>
        <dbReference type="ChEBI" id="CHEBI:29105"/>
    </cofactor>
    <text evidence="1">Binds 2 Zn(2+) ions per subunit.</text>
</comment>
<comment type="pathway">
    <text evidence="1">Secondary metabolite metabolism; methylglyoxal degradation; (R)-lactate from methylglyoxal: step 2/2.</text>
</comment>
<comment type="subunit">
    <text evidence="1">Monomer.</text>
</comment>
<comment type="similarity">
    <text evidence="1">Belongs to the metallo-beta-lactamase superfamily. Glyoxalase II family.</text>
</comment>
<evidence type="ECO:0000255" key="1">
    <source>
        <dbReference type="HAMAP-Rule" id="MF_01374"/>
    </source>
</evidence>
<dbReference type="EC" id="3.1.2.6" evidence="1"/>
<dbReference type="EMBL" id="CP001048">
    <property type="protein sequence ID" value="ACC90042.1"/>
    <property type="molecule type" value="Genomic_DNA"/>
</dbReference>
<dbReference type="RefSeq" id="WP_011192852.1">
    <property type="nucleotide sequence ID" value="NZ_CP009780.1"/>
</dbReference>
<dbReference type="SMR" id="B2KAD1"/>
<dbReference type="GeneID" id="49785020"/>
<dbReference type="KEGG" id="ypb:YPTS_3085"/>
<dbReference type="PATRIC" id="fig|502801.10.peg.2518"/>
<dbReference type="UniPathway" id="UPA00619">
    <property type="reaction ID" value="UER00676"/>
</dbReference>
<dbReference type="GO" id="GO:0004416">
    <property type="term" value="F:hydroxyacylglutathione hydrolase activity"/>
    <property type="evidence" value="ECO:0007669"/>
    <property type="project" value="UniProtKB-UniRule"/>
</dbReference>
<dbReference type="GO" id="GO:0046872">
    <property type="term" value="F:metal ion binding"/>
    <property type="evidence" value="ECO:0007669"/>
    <property type="project" value="UniProtKB-KW"/>
</dbReference>
<dbReference type="GO" id="GO:0019243">
    <property type="term" value="P:methylglyoxal catabolic process to D-lactate via S-lactoyl-glutathione"/>
    <property type="evidence" value="ECO:0007669"/>
    <property type="project" value="InterPro"/>
</dbReference>
<dbReference type="CDD" id="cd07723">
    <property type="entry name" value="hydroxyacylglutathione_hydrolase_MBL-fold"/>
    <property type="match status" value="1"/>
</dbReference>
<dbReference type="Gene3D" id="3.60.15.10">
    <property type="entry name" value="Ribonuclease Z/Hydroxyacylglutathione hydrolase-like"/>
    <property type="match status" value="1"/>
</dbReference>
<dbReference type="HAMAP" id="MF_01374">
    <property type="entry name" value="Glyoxalase_2"/>
    <property type="match status" value="1"/>
</dbReference>
<dbReference type="InterPro" id="IPR035680">
    <property type="entry name" value="Clx_II_MBL"/>
</dbReference>
<dbReference type="InterPro" id="IPR050110">
    <property type="entry name" value="Glyoxalase_II_hydrolase"/>
</dbReference>
<dbReference type="InterPro" id="IPR032282">
    <property type="entry name" value="HAGH_C"/>
</dbReference>
<dbReference type="InterPro" id="IPR017782">
    <property type="entry name" value="Hydroxyacylglutathione_Hdrlase"/>
</dbReference>
<dbReference type="InterPro" id="IPR001279">
    <property type="entry name" value="Metallo-B-lactamas"/>
</dbReference>
<dbReference type="InterPro" id="IPR036866">
    <property type="entry name" value="RibonucZ/Hydroxyglut_hydro"/>
</dbReference>
<dbReference type="NCBIfam" id="TIGR03413">
    <property type="entry name" value="GSH_gloB"/>
    <property type="match status" value="1"/>
</dbReference>
<dbReference type="PANTHER" id="PTHR43705">
    <property type="entry name" value="HYDROXYACYLGLUTATHIONE HYDROLASE"/>
    <property type="match status" value="1"/>
</dbReference>
<dbReference type="PANTHER" id="PTHR43705:SF1">
    <property type="entry name" value="HYDROXYACYLGLUTATHIONE HYDROLASE GLOB"/>
    <property type="match status" value="1"/>
</dbReference>
<dbReference type="Pfam" id="PF16123">
    <property type="entry name" value="HAGH_C"/>
    <property type="match status" value="1"/>
</dbReference>
<dbReference type="Pfam" id="PF00753">
    <property type="entry name" value="Lactamase_B"/>
    <property type="match status" value="1"/>
</dbReference>
<dbReference type="PIRSF" id="PIRSF005457">
    <property type="entry name" value="Glx"/>
    <property type="match status" value="1"/>
</dbReference>
<dbReference type="SMART" id="SM00849">
    <property type="entry name" value="Lactamase_B"/>
    <property type="match status" value="1"/>
</dbReference>
<dbReference type="SUPFAM" id="SSF56281">
    <property type="entry name" value="Metallo-hydrolase/oxidoreductase"/>
    <property type="match status" value="1"/>
</dbReference>
<proteinExistence type="inferred from homology"/>
<organism>
    <name type="scientific">Yersinia pseudotuberculosis serotype IB (strain PB1/+)</name>
    <dbReference type="NCBI Taxonomy" id="502801"/>
    <lineage>
        <taxon>Bacteria</taxon>
        <taxon>Pseudomonadati</taxon>
        <taxon>Pseudomonadota</taxon>
        <taxon>Gammaproteobacteria</taxon>
        <taxon>Enterobacterales</taxon>
        <taxon>Yersiniaceae</taxon>
        <taxon>Yersinia</taxon>
    </lineage>
</organism>
<keyword id="KW-0378">Hydrolase</keyword>
<keyword id="KW-0479">Metal-binding</keyword>
<keyword id="KW-0862">Zinc</keyword>
<gene>
    <name evidence="1" type="primary">gloB</name>
    <name type="ordered locus">YPTS_3085</name>
</gene>
<protein>
    <recommendedName>
        <fullName evidence="1">Hydroxyacylglutathione hydrolase</fullName>
        <ecNumber evidence="1">3.1.2.6</ecNumber>
    </recommendedName>
    <alternativeName>
        <fullName evidence="1">Glyoxalase II</fullName>
        <shortName evidence="1">Glx II</shortName>
    </alternativeName>
</protein>
<sequence length="251" mass="27848">MNLISIPAFQDNYIWLLANRQKHCVIVDPGESAPVLATLAQGQYVPQAILLTHHHNDHVGGVADLRHHFPDIPVYGPQETAKKGATVIVNDGDSLTIAGQNYTIIAVPGHTLGHIAYYSSPYLFCGDTLFSAGCGRLLEGTPEQMYASIQRLAQLPDETLICCAHEYTLSNLKFAHAILPADQDIATYQQQIEQLRSKNLPSLPVKLQFERKINVFLRCNDIDLQRKIGITSPPDSLVSVFCELRSRKDSF</sequence>